<keyword id="KW-0413">Isomerase</keyword>
<keyword id="KW-0479">Metal-binding</keyword>
<keyword id="KW-0862">Zinc</keyword>
<accession>Q1C713</accession>
<proteinExistence type="inferred from homology"/>
<reference key="1">
    <citation type="journal article" date="2006" name="J. Bacteriol.">
        <title>Complete genome sequence of Yersinia pestis strains Antiqua and Nepal516: evidence of gene reduction in an emerging pathogen.</title>
        <authorList>
            <person name="Chain P.S.G."/>
            <person name="Hu P."/>
            <person name="Malfatti S.A."/>
            <person name="Radnedge L."/>
            <person name="Larimer F."/>
            <person name="Vergez L.M."/>
            <person name="Worsham P."/>
            <person name="Chu M.C."/>
            <person name="Andersen G.L."/>
        </authorList>
    </citation>
    <scope>NUCLEOTIDE SEQUENCE [LARGE SCALE GENOMIC DNA]</scope>
    <source>
        <strain>Antiqua</strain>
    </source>
</reference>
<comment type="function">
    <text evidence="1">Catalyzes the isomerization of 5-dehydro-4-deoxy-D-glucuronate to 3-deoxy-D-glycero-2,5-hexodiulosonate.</text>
</comment>
<comment type="catalytic activity">
    <reaction evidence="1">
        <text>5-dehydro-4-deoxy-D-glucuronate = 3-deoxy-D-glycero-2,5-hexodiulosonate</text>
        <dbReference type="Rhea" id="RHEA:23896"/>
        <dbReference type="ChEBI" id="CHEBI:17117"/>
        <dbReference type="ChEBI" id="CHEBI:29071"/>
        <dbReference type="EC" id="5.3.1.17"/>
    </reaction>
</comment>
<comment type="cofactor">
    <cofactor evidence="1">
        <name>Zn(2+)</name>
        <dbReference type="ChEBI" id="CHEBI:29105"/>
    </cofactor>
    <text evidence="1">Binds 1 zinc ion per subunit.</text>
</comment>
<comment type="pathway">
    <text evidence="1">Glycan metabolism; pectin degradation; 2-dehydro-3-deoxy-D-gluconate from pectin: step 4/5.</text>
</comment>
<comment type="similarity">
    <text evidence="1">Belongs to the KduI family.</text>
</comment>
<organism>
    <name type="scientific">Yersinia pestis bv. Antiqua (strain Antiqua)</name>
    <dbReference type="NCBI Taxonomy" id="360102"/>
    <lineage>
        <taxon>Bacteria</taxon>
        <taxon>Pseudomonadati</taxon>
        <taxon>Pseudomonadota</taxon>
        <taxon>Gammaproteobacteria</taxon>
        <taxon>Enterobacterales</taxon>
        <taxon>Yersiniaceae</taxon>
        <taxon>Yersinia</taxon>
    </lineage>
</organism>
<evidence type="ECO:0000255" key="1">
    <source>
        <dbReference type="HAMAP-Rule" id="MF_00687"/>
    </source>
</evidence>
<dbReference type="EC" id="5.3.1.17" evidence="1"/>
<dbReference type="EMBL" id="CP000308">
    <property type="protein sequence ID" value="ABG13759.1"/>
    <property type="molecule type" value="Genomic_DNA"/>
</dbReference>
<dbReference type="RefSeq" id="WP_002210829.1">
    <property type="nucleotide sequence ID" value="NZ_CP009906.1"/>
</dbReference>
<dbReference type="SMR" id="Q1C713"/>
<dbReference type="GeneID" id="57976853"/>
<dbReference type="KEGG" id="ypa:YPA_1793"/>
<dbReference type="UniPathway" id="UPA00545">
    <property type="reaction ID" value="UER00826"/>
</dbReference>
<dbReference type="Proteomes" id="UP000001971">
    <property type="component" value="Chromosome"/>
</dbReference>
<dbReference type="GO" id="GO:0008697">
    <property type="term" value="F:4-deoxy-L-threo-5-hexosulose-uronate ketol-isomerase activity"/>
    <property type="evidence" value="ECO:0007669"/>
    <property type="project" value="UniProtKB-UniRule"/>
</dbReference>
<dbReference type="GO" id="GO:0008270">
    <property type="term" value="F:zinc ion binding"/>
    <property type="evidence" value="ECO:0007669"/>
    <property type="project" value="UniProtKB-UniRule"/>
</dbReference>
<dbReference type="GO" id="GO:0019698">
    <property type="term" value="P:D-galacturonate catabolic process"/>
    <property type="evidence" value="ECO:0007669"/>
    <property type="project" value="TreeGrafter"/>
</dbReference>
<dbReference type="GO" id="GO:0042840">
    <property type="term" value="P:D-glucuronate catabolic process"/>
    <property type="evidence" value="ECO:0007669"/>
    <property type="project" value="TreeGrafter"/>
</dbReference>
<dbReference type="GO" id="GO:0045490">
    <property type="term" value="P:pectin catabolic process"/>
    <property type="evidence" value="ECO:0007669"/>
    <property type="project" value="UniProtKB-UniRule"/>
</dbReference>
<dbReference type="CDD" id="cd20491">
    <property type="entry name" value="cupin_KduI_C"/>
    <property type="match status" value="1"/>
</dbReference>
<dbReference type="CDD" id="cd20294">
    <property type="entry name" value="cupin_KduI_N"/>
    <property type="match status" value="1"/>
</dbReference>
<dbReference type="FunFam" id="2.60.120.10:FF:000018">
    <property type="entry name" value="4-deoxy-L-threo-5-hexosulose-uronate ketol-isomerase"/>
    <property type="match status" value="1"/>
</dbReference>
<dbReference type="FunFam" id="2.60.120.520:FF:000001">
    <property type="entry name" value="4-deoxy-L-threo-5-hexosulose-uronate ketol-isomerase"/>
    <property type="match status" value="1"/>
</dbReference>
<dbReference type="Gene3D" id="2.60.120.10">
    <property type="entry name" value="Jelly Rolls"/>
    <property type="match status" value="1"/>
</dbReference>
<dbReference type="Gene3D" id="2.60.120.520">
    <property type="entry name" value="pectin degrading enzyme 5-keto 4- deoxyuronate isomerase, domain 1"/>
    <property type="match status" value="1"/>
</dbReference>
<dbReference type="HAMAP" id="MF_00687">
    <property type="entry name" value="KduI"/>
    <property type="match status" value="1"/>
</dbReference>
<dbReference type="InterPro" id="IPR007045">
    <property type="entry name" value="KduI"/>
</dbReference>
<dbReference type="InterPro" id="IPR021120">
    <property type="entry name" value="KduI/IolB_isomerase"/>
</dbReference>
<dbReference type="InterPro" id="IPR027449">
    <property type="entry name" value="KduI_N"/>
</dbReference>
<dbReference type="InterPro" id="IPR014710">
    <property type="entry name" value="RmlC-like_jellyroll"/>
</dbReference>
<dbReference type="InterPro" id="IPR011051">
    <property type="entry name" value="RmlC_Cupin_sf"/>
</dbReference>
<dbReference type="NCBIfam" id="NF002091">
    <property type="entry name" value="PRK00924.1"/>
    <property type="match status" value="1"/>
</dbReference>
<dbReference type="PANTHER" id="PTHR38461">
    <property type="entry name" value="4-DEOXY-L-THREO-5-HEXOSULOSE-URONATE KETOL-ISOMERASE"/>
    <property type="match status" value="1"/>
</dbReference>
<dbReference type="PANTHER" id="PTHR38461:SF1">
    <property type="entry name" value="4-DEOXY-L-THREO-5-HEXOSULOSE-URONATE KETOL-ISOMERASE"/>
    <property type="match status" value="1"/>
</dbReference>
<dbReference type="Pfam" id="PF04962">
    <property type="entry name" value="KduI"/>
    <property type="match status" value="1"/>
</dbReference>
<dbReference type="PIRSF" id="PIRSF006625">
    <property type="entry name" value="KduI"/>
    <property type="match status" value="1"/>
</dbReference>
<dbReference type="SUPFAM" id="SSF51182">
    <property type="entry name" value="RmlC-like cupins"/>
    <property type="match status" value="1"/>
</dbReference>
<gene>
    <name evidence="1" type="primary">kduI</name>
    <name type="ordered locus">YPA_1793</name>
</gene>
<name>KDUI_YERPA</name>
<feature type="chain" id="PRO_1000045096" description="4-deoxy-L-threo-5-hexosulose-uronate ketol-isomerase">
    <location>
        <begin position="1"/>
        <end position="278"/>
    </location>
</feature>
<feature type="binding site" evidence="1">
    <location>
        <position position="196"/>
    </location>
    <ligand>
        <name>Zn(2+)</name>
        <dbReference type="ChEBI" id="CHEBI:29105"/>
    </ligand>
</feature>
<feature type="binding site" evidence="1">
    <location>
        <position position="198"/>
    </location>
    <ligand>
        <name>Zn(2+)</name>
        <dbReference type="ChEBI" id="CHEBI:29105"/>
    </ligand>
</feature>
<feature type="binding site" evidence="1">
    <location>
        <position position="203"/>
    </location>
    <ligand>
        <name>Zn(2+)</name>
        <dbReference type="ChEBI" id="CHEBI:29105"/>
    </ligand>
</feature>
<feature type="binding site" evidence="1">
    <location>
        <position position="245"/>
    </location>
    <ligand>
        <name>Zn(2+)</name>
        <dbReference type="ChEBI" id="CHEBI:29105"/>
    </ligand>
</feature>
<sequence length="278" mass="31083">MQVRQSIHSDHAKQLDTAGLRREFLIEKIFAADDYTMTYSHIDRIIVGGILPVSKAVSIGNEVGKQLGVSYFLERRELGAINIGGPGLIVVDGQTYDIGNEEALYVGKGAKEVKFSSIDRANPAKFYYNSAPAHTTYPNKKITLAEASPQTLGDDATSNRRTINKYIVPDVLPTCQLSMGLTKLAPGSLWNTMPCHTHERRMEVYFYFDMDEETAVFHMMGQPQETRHLLVHNEQAVISPSWSIHSGVGTKRYTFIWGMVGENQVFGDMDHIAVSELR</sequence>
<protein>
    <recommendedName>
        <fullName evidence="1">4-deoxy-L-threo-5-hexosulose-uronate ketol-isomerase</fullName>
        <ecNumber evidence="1">5.3.1.17</ecNumber>
    </recommendedName>
    <alternativeName>
        <fullName evidence="1">5-keto-4-deoxyuronate isomerase</fullName>
    </alternativeName>
    <alternativeName>
        <fullName evidence="1">DKI isomerase</fullName>
    </alternativeName>
</protein>